<reference key="1">
    <citation type="journal article" date="2004" name="Genome Res.">
        <title>The genomic sequence and comparative analysis of the rat major histocompatibility complex.</title>
        <authorList>
            <person name="Hurt P."/>
            <person name="Walter L."/>
            <person name="Sudbrak R."/>
            <person name="Klages S."/>
            <person name="Mueller I."/>
            <person name="Shiina T."/>
            <person name="Inoko H."/>
            <person name="Lehrach H."/>
            <person name="Guenther E."/>
            <person name="Reinhardt R."/>
            <person name="Himmelbauer H."/>
        </authorList>
    </citation>
    <scope>NUCLEOTIDE SEQUENCE [LARGE SCALE GENOMIC DNA]</scope>
    <source>
        <strain>Brown Norway</strain>
    </source>
</reference>
<reference key="2">
    <citation type="journal article" date="2004" name="Genome Res.">
        <title>The status, quality, and expansion of the NIH full-length cDNA project: the Mammalian Gene Collection (MGC).</title>
        <authorList>
            <consortium name="The MGC Project Team"/>
        </authorList>
    </citation>
    <scope>NUCLEOTIDE SEQUENCE [LARGE SCALE MRNA]</scope>
    <source>
        <tissue>Ovary</tissue>
    </source>
</reference>
<dbReference type="EMBL" id="BX883048">
    <property type="protein sequence ID" value="CAE84040.1"/>
    <property type="molecule type" value="Genomic_DNA"/>
</dbReference>
<dbReference type="EMBL" id="BC126073">
    <property type="protein sequence ID" value="AAI26074.1"/>
    <property type="molecule type" value="mRNA"/>
</dbReference>
<dbReference type="RefSeq" id="NP_997709.1">
    <property type="nucleotide sequence ID" value="NM_212544.2"/>
</dbReference>
<dbReference type="SMR" id="Q6MG07"/>
<dbReference type="FunCoup" id="Q6MG07">
    <property type="interactions" value="1506"/>
</dbReference>
<dbReference type="STRING" id="10116.ENSRNOP00000031469"/>
<dbReference type="PhosphoSitePlus" id="Q6MG07"/>
<dbReference type="PaxDb" id="10116-ENSRNOP00000031469"/>
<dbReference type="GeneID" id="361788"/>
<dbReference type="KEGG" id="rno:361788"/>
<dbReference type="UCSC" id="RGD:1303270">
    <property type="organism name" value="rat"/>
</dbReference>
<dbReference type="AGR" id="RGD:1303270"/>
<dbReference type="CTD" id="80742"/>
<dbReference type="RGD" id="1303270">
    <property type="gene designation" value="Prr3"/>
</dbReference>
<dbReference type="VEuPathDB" id="HostDB:ENSRNOG00000025806"/>
<dbReference type="eggNOG" id="ENOG502TAPB">
    <property type="taxonomic scope" value="Eukaryota"/>
</dbReference>
<dbReference type="HOGENOM" id="CLU_112270_0_0_1"/>
<dbReference type="InParanoid" id="Q6MG07"/>
<dbReference type="OrthoDB" id="89028at9989"/>
<dbReference type="PhylomeDB" id="Q6MG07"/>
<dbReference type="TreeFam" id="TF337284"/>
<dbReference type="PRO" id="PR:Q6MG07"/>
<dbReference type="Proteomes" id="UP000002494">
    <property type="component" value="Chromosome 20"/>
</dbReference>
<dbReference type="Bgee" id="ENSRNOG00000025806">
    <property type="expression patterns" value="Expressed in ovary and 20 other cell types or tissues"/>
</dbReference>
<dbReference type="ExpressionAtlas" id="Q6MG07">
    <property type="expression patterns" value="baseline and differential"/>
</dbReference>
<dbReference type="GO" id="GO:0008270">
    <property type="term" value="F:zinc ion binding"/>
    <property type="evidence" value="ECO:0007669"/>
    <property type="project" value="UniProtKB-KW"/>
</dbReference>
<dbReference type="Gene3D" id="4.10.1000.10">
    <property type="entry name" value="Zinc finger, CCCH-type"/>
    <property type="match status" value="1"/>
</dbReference>
<dbReference type="InterPro" id="IPR042805">
    <property type="entry name" value="PRR3"/>
</dbReference>
<dbReference type="InterPro" id="IPR000571">
    <property type="entry name" value="Znf_CCCH"/>
</dbReference>
<dbReference type="InterPro" id="IPR036855">
    <property type="entry name" value="Znf_CCCH_sf"/>
</dbReference>
<dbReference type="PANTHER" id="PTHR47398">
    <property type="entry name" value="PROLINE-RICH PROTEIN 3"/>
    <property type="match status" value="1"/>
</dbReference>
<dbReference type="PANTHER" id="PTHR47398:SF1">
    <property type="entry name" value="PROLINE-RICH PROTEIN 3-RELATED"/>
    <property type="match status" value="1"/>
</dbReference>
<dbReference type="Pfam" id="PF00642">
    <property type="entry name" value="zf-CCCH"/>
    <property type="match status" value="1"/>
</dbReference>
<dbReference type="SMART" id="SM00356">
    <property type="entry name" value="ZnF_C3H1"/>
    <property type="match status" value="1"/>
</dbReference>
<dbReference type="SUPFAM" id="SSF90229">
    <property type="entry name" value="CCCH zinc finger"/>
    <property type="match status" value="1"/>
</dbReference>
<dbReference type="PROSITE" id="PS50103">
    <property type="entry name" value="ZF_C3H1"/>
    <property type="match status" value="1"/>
</dbReference>
<evidence type="ECO:0000255" key="1">
    <source>
        <dbReference type="PROSITE-ProRule" id="PRU00723"/>
    </source>
</evidence>
<evidence type="ECO:0000256" key="2">
    <source>
        <dbReference type="SAM" id="MobiDB-lite"/>
    </source>
</evidence>
<proteinExistence type="evidence at transcript level"/>
<keyword id="KW-0479">Metal-binding</keyword>
<keyword id="KW-1185">Reference proteome</keyword>
<keyword id="KW-0862">Zinc</keyword>
<keyword id="KW-0863">Zinc-finger</keyword>
<feature type="chain" id="PRO_0000213893" description="Proline-rich protein 3">
    <location>
        <begin position="1"/>
        <end position="186"/>
    </location>
</feature>
<feature type="zinc finger region" description="C3H1-type" evidence="1">
    <location>
        <begin position="153"/>
        <end position="181"/>
    </location>
</feature>
<feature type="region of interest" description="Disordered" evidence="2">
    <location>
        <begin position="1"/>
        <end position="97"/>
    </location>
</feature>
<feature type="compositionally biased region" description="Pro residues" evidence="2">
    <location>
        <begin position="33"/>
        <end position="44"/>
    </location>
</feature>
<feature type="compositionally biased region" description="Pro residues" evidence="2">
    <location>
        <begin position="67"/>
        <end position="79"/>
    </location>
</feature>
<organism>
    <name type="scientific">Rattus norvegicus</name>
    <name type="common">Rat</name>
    <dbReference type="NCBI Taxonomy" id="10116"/>
    <lineage>
        <taxon>Eukaryota</taxon>
        <taxon>Metazoa</taxon>
        <taxon>Chordata</taxon>
        <taxon>Craniata</taxon>
        <taxon>Vertebrata</taxon>
        <taxon>Euteleostomi</taxon>
        <taxon>Mammalia</taxon>
        <taxon>Eutheria</taxon>
        <taxon>Euarchontoglires</taxon>
        <taxon>Glires</taxon>
        <taxon>Rodentia</taxon>
        <taxon>Myomorpha</taxon>
        <taxon>Muroidea</taxon>
        <taxon>Muridae</taxon>
        <taxon>Murinae</taxon>
        <taxon>Rattus</taxon>
    </lineage>
</organism>
<protein>
    <recommendedName>
        <fullName>Proline-rich protein 3</fullName>
    </recommendedName>
    <alternativeName>
        <fullName>MHC class I region proline-rich protein CAT56</fullName>
    </alternativeName>
</protein>
<sequence>MPKRKKQNQPQPPQHLALSERDEPGDEEDERPMGPPSLLGPPPMANGKPGDPKSVFHRGPPGSRGPMIPPLLSLPPPPRGRGHIRGGLGPRSSPYGRGWWGVNTEPPFPGPGHGGPSREIFYQEPRNPRRLKSWSLVKNTYPPKDSPPMMEDKSDRPVCRHFSKKGHCRYEDHCAFYHPGVNGPPL</sequence>
<accession>Q6MG07</accession>
<accession>A0JN06</accession>
<gene>
    <name type="primary">Prr3</name>
    <name type="synonym">Cat56</name>
</gene>
<name>PRR3_RAT</name>